<reference key="1">
    <citation type="journal article" date="2002" name="Lancet">
        <title>Genome and virulence determinants of high virulence community-acquired MRSA.</title>
        <authorList>
            <person name="Baba T."/>
            <person name="Takeuchi F."/>
            <person name="Kuroda M."/>
            <person name="Yuzawa H."/>
            <person name="Aoki K."/>
            <person name="Oguchi A."/>
            <person name="Nagai Y."/>
            <person name="Iwama N."/>
            <person name="Asano K."/>
            <person name="Naimi T."/>
            <person name="Kuroda H."/>
            <person name="Cui L."/>
            <person name="Yamamoto K."/>
            <person name="Hiramatsu K."/>
        </authorList>
    </citation>
    <scope>NUCLEOTIDE SEQUENCE [LARGE SCALE GENOMIC DNA]</scope>
    <source>
        <strain>MW2</strain>
    </source>
</reference>
<gene>
    <name type="primary">msrB</name>
    <name type="synonym">pilB</name>
    <name type="ordered locus">MW1313</name>
</gene>
<organism>
    <name type="scientific">Staphylococcus aureus (strain MW2)</name>
    <dbReference type="NCBI Taxonomy" id="196620"/>
    <lineage>
        <taxon>Bacteria</taxon>
        <taxon>Bacillati</taxon>
        <taxon>Bacillota</taxon>
        <taxon>Bacilli</taxon>
        <taxon>Bacillales</taxon>
        <taxon>Staphylococcaceae</taxon>
        <taxon>Staphylococcus</taxon>
    </lineage>
</organism>
<accession>P0A087</accession>
<accession>Q93P62</accession>
<keyword id="KW-0560">Oxidoreductase</keyword>
<proteinExistence type="inferred from homology"/>
<sequence>MLKKDKSELTDIEYIVTQENGTEPPFMNEYWNHFAKGIYVDKISGKPLFTSEEKFHSECGWPSFSKALDDDEIIELVDKSFGMLRTEVRSEESNSHLGHVFNDGPKESGGLRYCINSAAIQFIPYEKLEELGYGDLISHFDK</sequence>
<dbReference type="EC" id="1.8.4.12"/>
<dbReference type="EMBL" id="BA000033">
    <property type="protein sequence ID" value="BAB95178.1"/>
    <property type="molecule type" value="Genomic_DNA"/>
</dbReference>
<dbReference type="RefSeq" id="WP_000913315.1">
    <property type="nucleotide sequence ID" value="NC_003923.1"/>
</dbReference>
<dbReference type="SMR" id="P0A087"/>
<dbReference type="KEGG" id="sam:MW1313"/>
<dbReference type="HOGENOM" id="CLU_031040_8_5_9"/>
<dbReference type="GO" id="GO:0005737">
    <property type="term" value="C:cytoplasm"/>
    <property type="evidence" value="ECO:0007669"/>
    <property type="project" value="TreeGrafter"/>
</dbReference>
<dbReference type="GO" id="GO:0033743">
    <property type="term" value="F:peptide-methionine (R)-S-oxide reductase activity"/>
    <property type="evidence" value="ECO:0007669"/>
    <property type="project" value="UniProtKB-UniRule"/>
</dbReference>
<dbReference type="GO" id="GO:0030091">
    <property type="term" value="P:protein repair"/>
    <property type="evidence" value="ECO:0007669"/>
    <property type="project" value="InterPro"/>
</dbReference>
<dbReference type="GO" id="GO:0006979">
    <property type="term" value="P:response to oxidative stress"/>
    <property type="evidence" value="ECO:0007669"/>
    <property type="project" value="InterPro"/>
</dbReference>
<dbReference type="FunFam" id="2.170.150.20:FF:000003">
    <property type="entry name" value="Peptide methionine sulfoxide reductase MsrB"/>
    <property type="match status" value="1"/>
</dbReference>
<dbReference type="Gene3D" id="2.170.150.20">
    <property type="entry name" value="Peptide methionine sulfoxide reductase"/>
    <property type="match status" value="1"/>
</dbReference>
<dbReference type="HAMAP" id="MF_01400">
    <property type="entry name" value="MsrB"/>
    <property type="match status" value="1"/>
</dbReference>
<dbReference type="InterPro" id="IPR028427">
    <property type="entry name" value="Met_Sox_Rdtase_MsrB"/>
</dbReference>
<dbReference type="InterPro" id="IPR002579">
    <property type="entry name" value="Met_Sox_Rdtase_MsrB_dom"/>
</dbReference>
<dbReference type="InterPro" id="IPR011057">
    <property type="entry name" value="Mss4-like_sf"/>
</dbReference>
<dbReference type="NCBIfam" id="TIGR00357">
    <property type="entry name" value="peptide-methionine (R)-S-oxide reductase MsrB"/>
    <property type="match status" value="1"/>
</dbReference>
<dbReference type="PANTHER" id="PTHR10173">
    <property type="entry name" value="METHIONINE SULFOXIDE REDUCTASE"/>
    <property type="match status" value="1"/>
</dbReference>
<dbReference type="PANTHER" id="PTHR10173:SF59">
    <property type="entry name" value="PEPTIDE METHIONINE SULFOXIDE REDUCTASE MSRA_MSRB"/>
    <property type="match status" value="1"/>
</dbReference>
<dbReference type="Pfam" id="PF01641">
    <property type="entry name" value="SelR"/>
    <property type="match status" value="1"/>
</dbReference>
<dbReference type="SUPFAM" id="SSF51316">
    <property type="entry name" value="Mss4-like"/>
    <property type="match status" value="1"/>
</dbReference>
<dbReference type="PROSITE" id="PS51790">
    <property type="entry name" value="MSRB"/>
    <property type="match status" value="1"/>
</dbReference>
<evidence type="ECO:0000255" key="1">
    <source>
        <dbReference type="PROSITE-ProRule" id="PRU01126"/>
    </source>
</evidence>
<evidence type="ECO:0000305" key="2"/>
<feature type="chain" id="PRO_0000140300" description="Peptide methionine sulfoxide reductase MsrB">
    <location>
        <begin position="1"/>
        <end position="142"/>
    </location>
</feature>
<feature type="domain" description="MsrB" evidence="1">
    <location>
        <begin position="2"/>
        <end position="125"/>
    </location>
</feature>
<feature type="active site" description="Nucleophile" evidence="1">
    <location>
        <position position="114"/>
    </location>
</feature>
<comment type="catalytic activity">
    <reaction>
        <text>L-methionyl-[protein] + [thioredoxin]-disulfide + H2O = L-methionyl-(R)-S-oxide-[protein] + [thioredoxin]-dithiol</text>
        <dbReference type="Rhea" id="RHEA:24164"/>
        <dbReference type="Rhea" id="RHEA-COMP:10698"/>
        <dbReference type="Rhea" id="RHEA-COMP:10700"/>
        <dbReference type="Rhea" id="RHEA-COMP:12313"/>
        <dbReference type="Rhea" id="RHEA-COMP:12314"/>
        <dbReference type="ChEBI" id="CHEBI:15377"/>
        <dbReference type="ChEBI" id="CHEBI:16044"/>
        <dbReference type="ChEBI" id="CHEBI:29950"/>
        <dbReference type="ChEBI" id="CHEBI:45764"/>
        <dbReference type="ChEBI" id="CHEBI:50058"/>
        <dbReference type="EC" id="1.8.4.12"/>
    </reaction>
</comment>
<comment type="similarity">
    <text evidence="2">Belongs to the MsrB Met sulfoxide reductase family.</text>
</comment>
<name>MSRB_STAAW</name>
<protein>
    <recommendedName>
        <fullName>Peptide methionine sulfoxide reductase MsrB</fullName>
        <ecNumber>1.8.4.12</ecNumber>
    </recommendedName>
    <alternativeName>
        <fullName>Peptide-methionine (R)-S-oxide reductase</fullName>
    </alternativeName>
</protein>